<evidence type="ECO:0000255" key="1">
    <source>
        <dbReference type="HAMAP-Rule" id="MF_00016"/>
    </source>
</evidence>
<dbReference type="EC" id="3.6.4.-" evidence="1"/>
<dbReference type="EMBL" id="CP000111">
    <property type="protein sequence ID" value="ABB50769.1"/>
    <property type="molecule type" value="Genomic_DNA"/>
</dbReference>
<dbReference type="RefSeq" id="WP_011377250.1">
    <property type="nucleotide sequence ID" value="NC_007577.1"/>
</dbReference>
<dbReference type="SMR" id="Q318C6"/>
<dbReference type="STRING" id="74546.PMT9312_1708"/>
<dbReference type="KEGG" id="pmi:PMT9312_1708"/>
<dbReference type="eggNOG" id="COG2255">
    <property type="taxonomic scope" value="Bacteria"/>
</dbReference>
<dbReference type="HOGENOM" id="CLU_055599_1_0_3"/>
<dbReference type="OrthoDB" id="9804478at2"/>
<dbReference type="Proteomes" id="UP000002715">
    <property type="component" value="Chromosome"/>
</dbReference>
<dbReference type="GO" id="GO:0005737">
    <property type="term" value="C:cytoplasm"/>
    <property type="evidence" value="ECO:0007669"/>
    <property type="project" value="UniProtKB-SubCell"/>
</dbReference>
<dbReference type="GO" id="GO:0048476">
    <property type="term" value="C:Holliday junction resolvase complex"/>
    <property type="evidence" value="ECO:0007669"/>
    <property type="project" value="UniProtKB-UniRule"/>
</dbReference>
<dbReference type="GO" id="GO:0005524">
    <property type="term" value="F:ATP binding"/>
    <property type="evidence" value="ECO:0007669"/>
    <property type="project" value="UniProtKB-UniRule"/>
</dbReference>
<dbReference type="GO" id="GO:0016887">
    <property type="term" value="F:ATP hydrolysis activity"/>
    <property type="evidence" value="ECO:0007669"/>
    <property type="project" value="InterPro"/>
</dbReference>
<dbReference type="GO" id="GO:0000400">
    <property type="term" value="F:four-way junction DNA binding"/>
    <property type="evidence" value="ECO:0007669"/>
    <property type="project" value="UniProtKB-UniRule"/>
</dbReference>
<dbReference type="GO" id="GO:0009378">
    <property type="term" value="F:four-way junction helicase activity"/>
    <property type="evidence" value="ECO:0007669"/>
    <property type="project" value="InterPro"/>
</dbReference>
<dbReference type="GO" id="GO:0006310">
    <property type="term" value="P:DNA recombination"/>
    <property type="evidence" value="ECO:0007669"/>
    <property type="project" value="UniProtKB-UniRule"/>
</dbReference>
<dbReference type="GO" id="GO:0006281">
    <property type="term" value="P:DNA repair"/>
    <property type="evidence" value="ECO:0007669"/>
    <property type="project" value="UniProtKB-UniRule"/>
</dbReference>
<dbReference type="CDD" id="cd00009">
    <property type="entry name" value="AAA"/>
    <property type="match status" value="1"/>
</dbReference>
<dbReference type="Gene3D" id="1.10.8.60">
    <property type="match status" value="1"/>
</dbReference>
<dbReference type="Gene3D" id="3.40.50.300">
    <property type="entry name" value="P-loop containing nucleotide triphosphate hydrolases"/>
    <property type="match status" value="1"/>
</dbReference>
<dbReference type="Gene3D" id="1.10.10.10">
    <property type="entry name" value="Winged helix-like DNA-binding domain superfamily/Winged helix DNA-binding domain"/>
    <property type="match status" value="1"/>
</dbReference>
<dbReference type="HAMAP" id="MF_00016">
    <property type="entry name" value="DNA_HJ_migration_RuvB"/>
    <property type="match status" value="1"/>
</dbReference>
<dbReference type="InterPro" id="IPR003593">
    <property type="entry name" value="AAA+_ATPase"/>
</dbReference>
<dbReference type="InterPro" id="IPR041445">
    <property type="entry name" value="AAA_lid_4"/>
</dbReference>
<dbReference type="InterPro" id="IPR004605">
    <property type="entry name" value="DNA_helicase_Holl-junc_RuvB"/>
</dbReference>
<dbReference type="InterPro" id="IPR027417">
    <property type="entry name" value="P-loop_NTPase"/>
</dbReference>
<dbReference type="InterPro" id="IPR008824">
    <property type="entry name" value="RuvB-like_N"/>
</dbReference>
<dbReference type="InterPro" id="IPR008823">
    <property type="entry name" value="RuvB_C"/>
</dbReference>
<dbReference type="InterPro" id="IPR036388">
    <property type="entry name" value="WH-like_DNA-bd_sf"/>
</dbReference>
<dbReference type="InterPro" id="IPR036390">
    <property type="entry name" value="WH_DNA-bd_sf"/>
</dbReference>
<dbReference type="NCBIfam" id="NF000868">
    <property type="entry name" value="PRK00080.1"/>
    <property type="match status" value="1"/>
</dbReference>
<dbReference type="NCBIfam" id="TIGR00635">
    <property type="entry name" value="ruvB"/>
    <property type="match status" value="1"/>
</dbReference>
<dbReference type="PANTHER" id="PTHR42848">
    <property type="match status" value="1"/>
</dbReference>
<dbReference type="PANTHER" id="PTHR42848:SF1">
    <property type="entry name" value="HOLLIDAY JUNCTION BRANCH MIGRATION COMPLEX SUBUNIT RUVB"/>
    <property type="match status" value="1"/>
</dbReference>
<dbReference type="Pfam" id="PF17864">
    <property type="entry name" value="AAA_lid_4"/>
    <property type="match status" value="1"/>
</dbReference>
<dbReference type="Pfam" id="PF05491">
    <property type="entry name" value="RuvB_C"/>
    <property type="match status" value="1"/>
</dbReference>
<dbReference type="Pfam" id="PF05496">
    <property type="entry name" value="RuvB_N"/>
    <property type="match status" value="1"/>
</dbReference>
<dbReference type="SMART" id="SM00382">
    <property type="entry name" value="AAA"/>
    <property type="match status" value="1"/>
</dbReference>
<dbReference type="SUPFAM" id="SSF52540">
    <property type="entry name" value="P-loop containing nucleoside triphosphate hydrolases"/>
    <property type="match status" value="1"/>
</dbReference>
<dbReference type="SUPFAM" id="SSF46785">
    <property type="entry name" value="Winged helix' DNA-binding domain"/>
    <property type="match status" value="1"/>
</dbReference>
<keyword id="KW-0067">ATP-binding</keyword>
<keyword id="KW-0963">Cytoplasm</keyword>
<keyword id="KW-0227">DNA damage</keyword>
<keyword id="KW-0233">DNA recombination</keyword>
<keyword id="KW-0234">DNA repair</keyword>
<keyword id="KW-0238">DNA-binding</keyword>
<keyword id="KW-0378">Hydrolase</keyword>
<keyword id="KW-0547">Nucleotide-binding</keyword>
<gene>
    <name evidence="1" type="primary">ruvB</name>
    <name type="ordered locus">PMT9312_1708</name>
</gene>
<name>RUVB_PROM9</name>
<organism>
    <name type="scientific">Prochlorococcus marinus (strain MIT 9312)</name>
    <dbReference type="NCBI Taxonomy" id="74546"/>
    <lineage>
        <taxon>Bacteria</taxon>
        <taxon>Bacillati</taxon>
        <taxon>Cyanobacteriota</taxon>
        <taxon>Cyanophyceae</taxon>
        <taxon>Synechococcales</taxon>
        <taxon>Prochlorococcaceae</taxon>
        <taxon>Prochlorococcus</taxon>
    </lineage>
</organism>
<sequence>MAIISSNIGDNDFSLRKKELRLVDSKIIPEEKRKNNLNLARPITFQEFIGQEKLKSSLRIAIDASIYRKEPLEHTLLYGQPGLGKTTLAFLIAKEMNTKCRIATAPAIERPRDIVGLLLGLKEGEVLFIDEIHRLNRLTEELLYSAMEDFRLDLTMGANRGARCRTINLPRFTLVGATTKLASISAPLRDRFGISQKIEFYTCDELKQIIDNFSRLISFNVDDEASSHLAKISRGTPRIALRLLRRVRDYAQVVKKTNVISVNLIKKALNSYQIDEKGLDYVDRQYLSFLNQNKNIPTGLDSIAAGLGDDSSMLEFVVEPYLIQIGFLTRTPRGRLLTALGKKYIDSKNDNF</sequence>
<reference key="1">
    <citation type="journal article" date="2006" name="Science">
        <title>Genomic islands and the ecology and evolution of Prochlorococcus.</title>
        <authorList>
            <person name="Coleman M.L."/>
            <person name="Sullivan M.B."/>
            <person name="Martiny A.C."/>
            <person name="Steglich C."/>
            <person name="Barry K."/>
            <person name="Delong E.F."/>
            <person name="Chisholm S.W."/>
        </authorList>
    </citation>
    <scope>NUCLEOTIDE SEQUENCE [LARGE SCALE GENOMIC DNA]</scope>
    <source>
        <strain>MIT 9312</strain>
    </source>
</reference>
<feature type="chain" id="PRO_0000235388" description="Holliday junction branch migration complex subunit RuvB">
    <location>
        <begin position="1"/>
        <end position="352"/>
    </location>
</feature>
<feature type="region of interest" description="Large ATPase domain (RuvB-L)" evidence="1">
    <location>
        <begin position="13"/>
        <end position="201"/>
    </location>
</feature>
<feature type="region of interest" description="Small ATPAse domain (RuvB-S)" evidence="1">
    <location>
        <begin position="202"/>
        <end position="273"/>
    </location>
</feature>
<feature type="region of interest" description="Head domain (RuvB-H)" evidence="1">
    <location>
        <begin position="276"/>
        <end position="352"/>
    </location>
</feature>
<feature type="binding site" evidence="1">
    <location>
        <position position="41"/>
    </location>
    <ligand>
        <name>ATP</name>
        <dbReference type="ChEBI" id="CHEBI:30616"/>
    </ligand>
</feature>
<feature type="binding site" evidence="1">
    <location>
        <position position="82"/>
    </location>
    <ligand>
        <name>ATP</name>
        <dbReference type="ChEBI" id="CHEBI:30616"/>
    </ligand>
</feature>
<feature type="binding site" evidence="1">
    <location>
        <position position="85"/>
    </location>
    <ligand>
        <name>ATP</name>
        <dbReference type="ChEBI" id="CHEBI:30616"/>
    </ligand>
</feature>
<feature type="binding site" evidence="1">
    <location>
        <position position="86"/>
    </location>
    <ligand>
        <name>ATP</name>
        <dbReference type="ChEBI" id="CHEBI:30616"/>
    </ligand>
</feature>
<feature type="binding site" evidence="1">
    <location>
        <position position="86"/>
    </location>
    <ligand>
        <name>Mg(2+)</name>
        <dbReference type="ChEBI" id="CHEBI:18420"/>
    </ligand>
</feature>
<feature type="binding site" evidence="1">
    <location>
        <position position="87"/>
    </location>
    <ligand>
        <name>ATP</name>
        <dbReference type="ChEBI" id="CHEBI:30616"/>
    </ligand>
</feature>
<feature type="binding site" evidence="1">
    <location>
        <begin position="148"/>
        <end position="150"/>
    </location>
    <ligand>
        <name>ATP</name>
        <dbReference type="ChEBI" id="CHEBI:30616"/>
    </ligand>
</feature>
<feature type="binding site" evidence="1">
    <location>
        <position position="191"/>
    </location>
    <ligand>
        <name>ATP</name>
        <dbReference type="ChEBI" id="CHEBI:30616"/>
    </ligand>
</feature>
<feature type="binding site" evidence="1">
    <location>
        <position position="201"/>
    </location>
    <ligand>
        <name>ATP</name>
        <dbReference type="ChEBI" id="CHEBI:30616"/>
    </ligand>
</feature>
<feature type="binding site" evidence="1">
    <location>
        <position position="238"/>
    </location>
    <ligand>
        <name>ATP</name>
        <dbReference type="ChEBI" id="CHEBI:30616"/>
    </ligand>
</feature>
<feature type="binding site" evidence="1">
    <location>
        <position position="330"/>
    </location>
    <ligand>
        <name>DNA</name>
        <dbReference type="ChEBI" id="CHEBI:16991"/>
    </ligand>
</feature>
<feature type="binding site" evidence="1">
    <location>
        <position position="335"/>
    </location>
    <ligand>
        <name>DNA</name>
        <dbReference type="ChEBI" id="CHEBI:16991"/>
    </ligand>
</feature>
<accession>Q318C6</accession>
<comment type="function">
    <text evidence="1">The RuvA-RuvB-RuvC complex processes Holliday junction (HJ) DNA during genetic recombination and DNA repair, while the RuvA-RuvB complex plays an important role in the rescue of blocked DNA replication forks via replication fork reversal (RFR). RuvA specifically binds to HJ cruciform DNA, conferring on it an open structure. The RuvB hexamer acts as an ATP-dependent pump, pulling dsDNA into and through the RuvAB complex. RuvB forms 2 homohexamers on either side of HJ DNA bound by 1 or 2 RuvA tetramers; 4 subunits per hexamer contact DNA at a time. Coordinated motions by a converter formed by DNA-disengaged RuvB subunits stimulates ATP hydrolysis and nucleotide exchange. Immobilization of the converter enables RuvB to convert the ATP-contained energy into a lever motion, pulling 2 nucleotides of DNA out of the RuvA tetramer per ATP hydrolyzed, thus driving DNA branch migration. The RuvB motors rotate together with the DNA substrate, which together with the progressing nucleotide cycle form the mechanistic basis for DNA recombination by continuous HJ branch migration. Branch migration allows RuvC to scan DNA until it finds its consensus sequence, where it cleaves and resolves cruciform DNA.</text>
</comment>
<comment type="catalytic activity">
    <reaction evidence="1">
        <text>ATP + H2O = ADP + phosphate + H(+)</text>
        <dbReference type="Rhea" id="RHEA:13065"/>
        <dbReference type="ChEBI" id="CHEBI:15377"/>
        <dbReference type="ChEBI" id="CHEBI:15378"/>
        <dbReference type="ChEBI" id="CHEBI:30616"/>
        <dbReference type="ChEBI" id="CHEBI:43474"/>
        <dbReference type="ChEBI" id="CHEBI:456216"/>
    </reaction>
</comment>
<comment type="subunit">
    <text evidence="1">Homohexamer. Forms an RuvA(8)-RuvB(12)-Holliday junction (HJ) complex. HJ DNA is sandwiched between 2 RuvA tetramers; dsDNA enters through RuvA and exits via RuvB. An RuvB hexamer assembles on each DNA strand where it exits the tetramer. Each RuvB hexamer is contacted by two RuvA subunits (via domain III) on 2 adjacent RuvB subunits; this complex drives branch migration. In the full resolvosome a probable DNA-RuvA(4)-RuvB(12)-RuvC(2) complex forms which resolves the HJ.</text>
</comment>
<comment type="subcellular location">
    <subcellularLocation>
        <location evidence="1">Cytoplasm</location>
    </subcellularLocation>
</comment>
<comment type="domain">
    <text evidence="1">Has 3 domains, the large (RuvB-L) and small ATPase (RuvB-S) domains and the C-terminal head (RuvB-H) domain. The head domain binds DNA, while the ATPase domains jointly bind ATP, ADP or are empty depending on the state of the subunit in the translocation cycle. During a single DNA translocation step the structure of each domain remains the same, but their relative positions change.</text>
</comment>
<comment type="similarity">
    <text evidence="1">Belongs to the RuvB family.</text>
</comment>
<protein>
    <recommendedName>
        <fullName evidence="1">Holliday junction branch migration complex subunit RuvB</fullName>
        <ecNumber evidence="1">3.6.4.-</ecNumber>
    </recommendedName>
</protein>
<proteinExistence type="inferred from homology"/>